<protein>
    <recommendedName>
        <fullName evidence="1">D-tagatose-1,6-bisphosphate aldolase subunit KbaZ</fullName>
    </recommendedName>
</protein>
<comment type="function">
    <text evidence="1">Component of the tagatose-1,6-bisphosphate aldolase KbaYZ that is required for full activity and stability of the Y subunit. Could have a chaperone-like function for the proper and stable folding of KbaY. When expressed alone, KbaZ does not show any aldolase activity.</text>
</comment>
<comment type="pathway">
    <text evidence="1">Carbohydrate metabolism; D-tagatose 6-phosphate degradation; D-glyceraldehyde 3-phosphate and glycerone phosphate from D-tagatose 6-phosphate: step 2/2.</text>
</comment>
<comment type="subunit">
    <text evidence="1">Forms a complex with KbaY.</text>
</comment>
<comment type="similarity">
    <text evidence="1">Belongs to the GatZ/KbaZ family. KbaZ subfamily.</text>
</comment>
<feature type="chain" id="PRO_0000372540" description="D-tagatose-1,6-bisphosphate aldolase subunit KbaZ">
    <location>
        <begin position="1"/>
        <end position="426"/>
    </location>
</feature>
<accession>B7M038</accession>
<proteinExistence type="inferred from homology"/>
<evidence type="ECO:0000255" key="1">
    <source>
        <dbReference type="HAMAP-Rule" id="MF_01295"/>
    </source>
</evidence>
<name>KBAZ_ECO8A</name>
<reference key="1">
    <citation type="journal article" date="2009" name="PLoS Genet.">
        <title>Organised genome dynamics in the Escherichia coli species results in highly diverse adaptive paths.</title>
        <authorList>
            <person name="Touchon M."/>
            <person name="Hoede C."/>
            <person name="Tenaillon O."/>
            <person name="Barbe V."/>
            <person name="Baeriswyl S."/>
            <person name="Bidet P."/>
            <person name="Bingen E."/>
            <person name="Bonacorsi S."/>
            <person name="Bouchier C."/>
            <person name="Bouvet O."/>
            <person name="Calteau A."/>
            <person name="Chiapello H."/>
            <person name="Clermont O."/>
            <person name="Cruveiller S."/>
            <person name="Danchin A."/>
            <person name="Diard M."/>
            <person name="Dossat C."/>
            <person name="Karoui M.E."/>
            <person name="Frapy E."/>
            <person name="Garry L."/>
            <person name="Ghigo J.M."/>
            <person name="Gilles A.M."/>
            <person name="Johnson J."/>
            <person name="Le Bouguenec C."/>
            <person name="Lescat M."/>
            <person name="Mangenot S."/>
            <person name="Martinez-Jehanne V."/>
            <person name="Matic I."/>
            <person name="Nassif X."/>
            <person name="Oztas S."/>
            <person name="Petit M.A."/>
            <person name="Pichon C."/>
            <person name="Rouy Z."/>
            <person name="Ruf C.S."/>
            <person name="Schneider D."/>
            <person name="Tourret J."/>
            <person name="Vacherie B."/>
            <person name="Vallenet D."/>
            <person name="Medigue C."/>
            <person name="Rocha E.P.C."/>
            <person name="Denamur E."/>
        </authorList>
    </citation>
    <scope>NUCLEOTIDE SEQUENCE [LARGE SCALE GENOMIC DNA]</scope>
    <source>
        <strain>IAI1</strain>
    </source>
</reference>
<gene>
    <name evidence="1" type="primary">kbaZ</name>
    <name type="ordered locus">ECIAI1_3280</name>
</gene>
<sequence length="426" mass="47251">MKHLTEMVRQHKAGKTNGIYAVCSAHPLVLEAAIRYASANQTPLLIEATSNQVDQFGGYTGMTPADFRGFVCQLADSLNFPQDALILGGDHLGPNRWQNLPAAQAMANADDLIKSYVAAGFKKIHLDCSMSCQDDPIPLTDDIVAERAARLAKVAEETCREHFGEADLEYVIGTEVPVPGGAHETLSELAVTTPDAARATLEAHRHAFEKQGLNAIWPRIIALVVQPGVEFDHTNVIDYQPAKASALSQMVENYETLIFEAHSTDYQTPQSLRQLVIDHFAILKVGPALTFSLREALFSLAAIEEELVPAKACSGLRQVLEDVMLDRPEYWQSHYHGDGNARRLARGYSYSDRVRYYWPDSQIDDAFAHLVRNLADSPIPLPLISQYLPLQYVKVRSGELQPTPRELIINHIQDILAQYHTACEGQ</sequence>
<organism>
    <name type="scientific">Escherichia coli O8 (strain IAI1)</name>
    <dbReference type="NCBI Taxonomy" id="585034"/>
    <lineage>
        <taxon>Bacteria</taxon>
        <taxon>Pseudomonadati</taxon>
        <taxon>Pseudomonadota</taxon>
        <taxon>Gammaproteobacteria</taxon>
        <taxon>Enterobacterales</taxon>
        <taxon>Enterobacteriaceae</taxon>
        <taxon>Escherichia</taxon>
    </lineage>
</organism>
<dbReference type="EMBL" id="CU928160">
    <property type="protein sequence ID" value="CAR00094.1"/>
    <property type="molecule type" value="Genomic_DNA"/>
</dbReference>
<dbReference type="RefSeq" id="WP_000681936.1">
    <property type="nucleotide sequence ID" value="NC_011741.1"/>
</dbReference>
<dbReference type="SMR" id="B7M038"/>
<dbReference type="KEGG" id="ecr:ECIAI1_3280"/>
<dbReference type="HOGENOM" id="CLU_053334_0_0_6"/>
<dbReference type="UniPathway" id="UPA00704">
    <property type="reaction ID" value="UER00716"/>
</dbReference>
<dbReference type="GO" id="GO:0005886">
    <property type="term" value="C:plasma membrane"/>
    <property type="evidence" value="ECO:0007669"/>
    <property type="project" value="TreeGrafter"/>
</dbReference>
<dbReference type="GO" id="GO:0005975">
    <property type="term" value="P:carbohydrate metabolic process"/>
    <property type="evidence" value="ECO:0007669"/>
    <property type="project" value="InterPro"/>
</dbReference>
<dbReference type="GO" id="GO:2001059">
    <property type="term" value="P:D-tagatose 6-phosphate catabolic process"/>
    <property type="evidence" value="ECO:0007669"/>
    <property type="project" value="UniProtKB-UniRule"/>
</dbReference>
<dbReference type="GO" id="GO:0009401">
    <property type="term" value="P:phosphoenolpyruvate-dependent sugar phosphotransferase system"/>
    <property type="evidence" value="ECO:0007669"/>
    <property type="project" value="TreeGrafter"/>
</dbReference>
<dbReference type="FunFam" id="3.20.20.70:FF:000141">
    <property type="entry name" value="D-tagatose-1,6-bisphosphate aldolase subunit GatZ"/>
    <property type="match status" value="1"/>
</dbReference>
<dbReference type="Gene3D" id="3.20.20.70">
    <property type="entry name" value="Aldolase class I"/>
    <property type="match status" value="1"/>
</dbReference>
<dbReference type="Gene3D" id="1.10.400.20">
    <property type="entry name" value="putative tagatose 6-phosphate kinase domain like"/>
    <property type="match status" value="1"/>
</dbReference>
<dbReference type="HAMAP" id="MF_01295">
    <property type="entry name" value="Tagatose_aldol_KbaZ"/>
    <property type="match status" value="1"/>
</dbReference>
<dbReference type="InterPro" id="IPR013785">
    <property type="entry name" value="Aldolase_TIM"/>
</dbReference>
<dbReference type="InterPro" id="IPR012062">
    <property type="entry name" value="GatZ/KbaZ-like"/>
</dbReference>
<dbReference type="InterPro" id="IPR050303">
    <property type="entry name" value="GatZ_KbaZ_carbometab"/>
</dbReference>
<dbReference type="InterPro" id="IPR023435">
    <property type="entry name" value="TagBP_ald_KbaZ"/>
</dbReference>
<dbReference type="NCBIfam" id="TIGR02810">
    <property type="entry name" value="agaZ_gatZ"/>
    <property type="match status" value="1"/>
</dbReference>
<dbReference type="NCBIfam" id="NF012002">
    <property type="entry name" value="PRK15458.1"/>
    <property type="match status" value="1"/>
</dbReference>
<dbReference type="PANTHER" id="PTHR32502:SF2">
    <property type="entry name" value="D-TAGATOSE-1,6-BISPHOSPHATE ALDOLASE SUBUNIT KBAZ"/>
    <property type="match status" value="1"/>
</dbReference>
<dbReference type="PANTHER" id="PTHR32502">
    <property type="entry name" value="N-ACETYLGALACTOSAMINE PERMEASE II COMPONENT-RELATED"/>
    <property type="match status" value="1"/>
</dbReference>
<dbReference type="Pfam" id="PF08013">
    <property type="entry name" value="GatZ_KbaZ-like"/>
    <property type="match status" value="1"/>
</dbReference>
<dbReference type="PIRSF" id="PIRSF009264">
    <property type="entry name" value="TagBP_ald_AgaZ"/>
    <property type="match status" value="1"/>
</dbReference>
<dbReference type="SUPFAM" id="SSF51569">
    <property type="entry name" value="Aldolase"/>
    <property type="match status" value="1"/>
</dbReference>